<organism>
    <name type="scientific">Methylibium petroleiphilum (strain ATCC BAA-1232 / LMG 22953 / PM1)</name>
    <dbReference type="NCBI Taxonomy" id="420662"/>
    <lineage>
        <taxon>Bacteria</taxon>
        <taxon>Pseudomonadati</taxon>
        <taxon>Pseudomonadota</taxon>
        <taxon>Betaproteobacteria</taxon>
        <taxon>Burkholderiales</taxon>
        <taxon>Sphaerotilaceae</taxon>
        <taxon>Methylibium</taxon>
    </lineage>
</organism>
<evidence type="ECO:0000255" key="1">
    <source>
        <dbReference type="HAMAP-Rule" id="MF_00004"/>
    </source>
</evidence>
<feature type="chain" id="PRO_0000321369" description="Adenine phosphoribosyltransferase">
    <location>
        <begin position="1"/>
        <end position="196"/>
    </location>
</feature>
<sequence length="196" mass="21557">MNDRHPPSVSTHRHATRMDDRSLIRQTIRTVPDWPSPGVQFRDITPLLQSPKVFRVLIDQFVHRYFDLRPDAIAGLDARGFIIGSVLAYELNIGFVPIRKKGKLPYTTVEESYELEYGSAAVEIHTDAVKAGDRVLLIDDLIATGGTMMAGKRLLERLGATVIEGAAIVDLPELGGAAKLRAAGLPLFTLVSFEGH</sequence>
<comment type="function">
    <text evidence="1">Catalyzes a salvage reaction resulting in the formation of AMP, that is energically less costly than de novo synthesis.</text>
</comment>
<comment type="catalytic activity">
    <reaction evidence="1">
        <text>AMP + diphosphate = 5-phospho-alpha-D-ribose 1-diphosphate + adenine</text>
        <dbReference type="Rhea" id="RHEA:16609"/>
        <dbReference type="ChEBI" id="CHEBI:16708"/>
        <dbReference type="ChEBI" id="CHEBI:33019"/>
        <dbReference type="ChEBI" id="CHEBI:58017"/>
        <dbReference type="ChEBI" id="CHEBI:456215"/>
        <dbReference type="EC" id="2.4.2.7"/>
    </reaction>
</comment>
<comment type="pathway">
    <text evidence="1">Purine metabolism; AMP biosynthesis via salvage pathway; AMP from adenine: step 1/1.</text>
</comment>
<comment type="subunit">
    <text evidence="1">Homodimer.</text>
</comment>
<comment type="subcellular location">
    <subcellularLocation>
        <location evidence="1">Cytoplasm</location>
    </subcellularLocation>
</comment>
<comment type="similarity">
    <text evidence="1">Belongs to the purine/pyrimidine phosphoribosyltransferase family.</text>
</comment>
<dbReference type="EC" id="2.4.2.7" evidence="1"/>
<dbReference type="EMBL" id="CP000555">
    <property type="protein sequence ID" value="ABM96765.1"/>
    <property type="molecule type" value="Genomic_DNA"/>
</dbReference>
<dbReference type="SMR" id="A2SMH6"/>
<dbReference type="STRING" id="420662.Mpe_A3812"/>
<dbReference type="KEGG" id="mpt:Mpe_A3812"/>
<dbReference type="eggNOG" id="COG0503">
    <property type="taxonomic scope" value="Bacteria"/>
</dbReference>
<dbReference type="HOGENOM" id="CLU_063339_3_0_4"/>
<dbReference type="UniPathway" id="UPA00588">
    <property type="reaction ID" value="UER00646"/>
</dbReference>
<dbReference type="Proteomes" id="UP000000366">
    <property type="component" value="Chromosome"/>
</dbReference>
<dbReference type="GO" id="GO:0005737">
    <property type="term" value="C:cytoplasm"/>
    <property type="evidence" value="ECO:0007669"/>
    <property type="project" value="UniProtKB-SubCell"/>
</dbReference>
<dbReference type="GO" id="GO:0002055">
    <property type="term" value="F:adenine binding"/>
    <property type="evidence" value="ECO:0007669"/>
    <property type="project" value="TreeGrafter"/>
</dbReference>
<dbReference type="GO" id="GO:0003999">
    <property type="term" value="F:adenine phosphoribosyltransferase activity"/>
    <property type="evidence" value="ECO:0007669"/>
    <property type="project" value="UniProtKB-UniRule"/>
</dbReference>
<dbReference type="GO" id="GO:0016208">
    <property type="term" value="F:AMP binding"/>
    <property type="evidence" value="ECO:0007669"/>
    <property type="project" value="TreeGrafter"/>
</dbReference>
<dbReference type="GO" id="GO:0006168">
    <property type="term" value="P:adenine salvage"/>
    <property type="evidence" value="ECO:0007669"/>
    <property type="project" value="InterPro"/>
</dbReference>
<dbReference type="GO" id="GO:0044209">
    <property type="term" value="P:AMP salvage"/>
    <property type="evidence" value="ECO:0007669"/>
    <property type="project" value="UniProtKB-UniRule"/>
</dbReference>
<dbReference type="GO" id="GO:0006166">
    <property type="term" value="P:purine ribonucleoside salvage"/>
    <property type="evidence" value="ECO:0007669"/>
    <property type="project" value="UniProtKB-KW"/>
</dbReference>
<dbReference type="CDD" id="cd06223">
    <property type="entry name" value="PRTases_typeI"/>
    <property type="match status" value="1"/>
</dbReference>
<dbReference type="FunFam" id="3.40.50.2020:FF:000021">
    <property type="entry name" value="Adenine phosphoribosyltransferase"/>
    <property type="match status" value="1"/>
</dbReference>
<dbReference type="Gene3D" id="3.40.50.2020">
    <property type="match status" value="1"/>
</dbReference>
<dbReference type="HAMAP" id="MF_00004">
    <property type="entry name" value="Aden_phosphoribosyltr"/>
    <property type="match status" value="1"/>
</dbReference>
<dbReference type="InterPro" id="IPR005764">
    <property type="entry name" value="Ade_phspho_trans"/>
</dbReference>
<dbReference type="InterPro" id="IPR000836">
    <property type="entry name" value="PRibTrfase_dom"/>
</dbReference>
<dbReference type="InterPro" id="IPR029057">
    <property type="entry name" value="PRTase-like"/>
</dbReference>
<dbReference type="InterPro" id="IPR050054">
    <property type="entry name" value="UPRTase/APRTase"/>
</dbReference>
<dbReference type="NCBIfam" id="TIGR01090">
    <property type="entry name" value="apt"/>
    <property type="match status" value="1"/>
</dbReference>
<dbReference type="NCBIfam" id="NF002634">
    <property type="entry name" value="PRK02304.1-3"/>
    <property type="match status" value="1"/>
</dbReference>
<dbReference type="NCBIfam" id="NF002636">
    <property type="entry name" value="PRK02304.1-5"/>
    <property type="match status" value="1"/>
</dbReference>
<dbReference type="PANTHER" id="PTHR32315">
    <property type="entry name" value="ADENINE PHOSPHORIBOSYLTRANSFERASE"/>
    <property type="match status" value="1"/>
</dbReference>
<dbReference type="PANTHER" id="PTHR32315:SF3">
    <property type="entry name" value="ADENINE PHOSPHORIBOSYLTRANSFERASE"/>
    <property type="match status" value="1"/>
</dbReference>
<dbReference type="Pfam" id="PF00156">
    <property type="entry name" value="Pribosyltran"/>
    <property type="match status" value="1"/>
</dbReference>
<dbReference type="SUPFAM" id="SSF53271">
    <property type="entry name" value="PRTase-like"/>
    <property type="match status" value="1"/>
</dbReference>
<dbReference type="PROSITE" id="PS00103">
    <property type="entry name" value="PUR_PYR_PR_TRANSFER"/>
    <property type="match status" value="1"/>
</dbReference>
<reference key="1">
    <citation type="journal article" date="2007" name="J. Bacteriol.">
        <title>Whole-genome analysis of the methyl tert-butyl ether-degrading beta-proteobacterium Methylibium petroleiphilum PM1.</title>
        <authorList>
            <person name="Kane S.R."/>
            <person name="Chakicherla A.Y."/>
            <person name="Chain P.S.G."/>
            <person name="Schmidt R."/>
            <person name="Shin M.W."/>
            <person name="Legler T.C."/>
            <person name="Scow K.M."/>
            <person name="Larimer F.W."/>
            <person name="Lucas S.M."/>
            <person name="Richardson P.M."/>
            <person name="Hristova K.R."/>
        </authorList>
    </citation>
    <scope>NUCLEOTIDE SEQUENCE [LARGE SCALE GENOMIC DNA]</scope>
    <source>
        <strain>ATCC BAA-1232 / LMG 22953 / PM1</strain>
    </source>
</reference>
<protein>
    <recommendedName>
        <fullName evidence="1">Adenine phosphoribosyltransferase</fullName>
        <shortName evidence="1">APRT</shortName>
        <ecNumber evidence="1">2.4.2.7</ecNumber>
    </recommendedName>
</protein>
<gene>
    <name evidence="1" type="primary">apt</name>
    <name type="ordered locus">Mpe_A3812</name>
</gene>
<proteinExistence type="inferred from homology"/>
<accession>A2SMH6</accession>
<name>APT_METPP</name>
<keyword id="KW-0963">Cytoplasm</keyword>
<keyword id="KW-0328">Glycosyltransferase</keyword>
<keyword id="KW-0660">Purine salvage</keyword>
<keyword id="KW-1185">Reference proteome</keyword>
<keyword id="KW-0808">Transferase</keyword>